<evidence type="ECO:0000255" key="1">
    <source>
        <dbReference type="HAMAP-Rule" id="MF_00503"/>
    </source>
</evidence>
<evidence type="ECO:0000305" key="2"/>
<feature type="chain" id="PRO_1000196217" description="Large ribosomal subunit protein bL9">
    <location>
        <begin position="1"/>
        <end position="148"/>
    </location>
</feature>
<gene>
    <name evidence="1" type="primary">rplI</name>
    <name type="ordered locus">Athe_0881</name>
</gene>
<dbReference type="EMBL" id="CP001393">
    <property type="protein sequence ID" value="ACM59991.1"/>
    <property type="molecule type" value="Genomic_DNA"/>
</dbReference>
<dbReference type="RefSeq" id="WP_015907417.1">
    <property type="nucleotide sequence ID" value="NC_012034.1"/>
</dbReference>
<dbReference type="SMR" id="B9MQN7"/>
<dbReference type="STRING" id="521460.Athe_0881"/>
<dbReference type="GeneID" id="31772237"/>
<dbReference type="KEGG" id="ate:Athe_0881"/>
<dbReference type="eggNOG" id="COG0359">
    <property type="taxonomic scope" value="Bacteria"/>
</dbReference>
<dbReference type="HOGENOM" id="CLU_078938_3_0_9"/>
<dbReference type="Proteomes" id="UP000007723">
    <property type="component" value="Chromosome"/>
</dbReference>
<dbReference type="GO" id="GO:1990904">
    <property type="term" value="C:ribonucleoprotein complex"/>
    <property type="evidence" value="ECO:0007669"/>
    <property type="project" value="UniProtKB-KW"/>
</dbReference>
<dbReference type="GO" id="GO:0005840">
    <property type="term" value="C:ribosome"/>
    <property type="evidence" value="ECO:0007669"/>
    <property type="project" value="UniProtKB-KW"/>
</dbReference>
<dbReference type="GO" id="GO:0019843">
    <property type="term" value="F:rRNA binding"/>
    <property type="evidence" value="ECO:0007669"/>
    <property type="project" value="UniProtKB-UniRule"/>
</dbReference>
<dbReference type="GO" id="GO:0003735">
    <property type="term" value="F:structural constituent of ribosome"/>
    <property type="evidence" value="ECO:0007669"/>
    <property type="project" value="InterPro"/>
</dbReference>
<dbReference type="GO" id="GO:0006412">
    <property type="term" value="P:translation"/>
    <property type="evidence" value="ECO:0007669"/>
    <property type="project" value="UniProtKB-UniRule"/>
</dbReference>
<dbReference type="FunFam" id="3.40.5.10:FF:000002">
    <property type="entry name" value="50S ribosomal protein L9"/>
    <property type="match status" value="1"/>
</dbReference>
<dbReference type="Gene3D" id="3.10.430.100">
    <property type="entry name" value="Ribosomal protein L9, C-terminal domain"/>
    <property type="match status" value="1"/>
</dbReference>
<dbReference type="Gene3D" id="3.40.5.10">
    <property type="entry name" value="Ribosomal protein L9, N-terminal domain"/>
    <property type="match status" value="1"/>
</dbReference>
<dbReference type="HAMAP" id="MF_00503">
    <property type="entry name" value="Ribosomal_bL9"/>
    <property type="match status" value="1"/>
</dbReference>
<dbReference type="InterPro" id="IPR000244">
    <property type="entry name" value="Ribosomal_bL9"/>
</dbReference>
<dbReference type="InterPro" id="IPR009027">
    <property type="entry name" value="Ribosomal_bL9/RNase_H1_N"/>
</dbReference>
<dbReference type="InterPro" id="IPR020594">
    <property type="entry name" value="Ribosomal_bL9_bac/chp"/>
</dbReference>
<dbReference type="InterPro" id="IPR020069">
    <property type="entry name" value="Ribosomal_bL9_C"/>
</dbReference>
<dbReference type="InterPro" id="IPR036791">
    <property type="entry name" value="Ribosomal_bL9_C_sf"/>
</dbReference>
<dbReference type="InterPro" id="IPR020070">
    <property type="entry name" value="Ribosomal_bL9_N"/>
</dbReference>
<dbReference type="InterPro" id="IPR036935">
    <property type="entry name" value="Ribosomal_bL9_N_sf"/>
</dbReference>
<dbReference type="NCBIfam" id="TIGR00158">
    <property type="entry name" value="L9"/>
    <property type="match status" value="1"/>
</dbReference>
<dbReference type="PANTHER" id="PTHR21368">
    <property type="entry name" value="50S RIBOSOMAL PROTEIN L9"/>
    <property type="match status" value="1"/>
</dbReference>
<dbReference type="Pfam" id="PF03948">
    <property type="entry name" value="Ribosomal_L9_C"/>
    <property type="match status" value="1"/>
</dbReference>
<dbReference type="Pfam" id="PF01281">
    <property type="entry name" value="Ribosomal_L9_N"/>
    <property type="match status" value="1"/>
</dbReference>
<dbReference type="SUPFAM" id="SSF55658">
    <property type="entry name" value="L9 N-domain-like"/>
    <property type="match status" value="1"/>
</dbReference>
<dbReference type="SUPFAM" id="SSF55653">
    <property type="entry name" value="Ribosomal protein L9 C-domain"/>
    <property type="match status" value="1"/>
</dbReference>
<reference key="1">
    <citation type="submission" date="2009-01" db="EMBL/GenBank/DDBJ databases">
        <title>Complete sequence of chromosome of Caldicellulosiruptor becscii DSM 6725.</title>
        <authorList>
            <person name="Lucas S."/>
            <person name="Copeland A."/>
            <person name="Lapidus A."/>
            <person name="Glavina del Rio T."/>
            <person name="Tice H."/>
            <person name="Bruce D."/>
            <person name="Goodwin L."/>
            <person name="Pitluck S."/>
            <person name="Sims D."/>
            <person name="Meincke L."/>
            <person name="Brettin T."/>
            <person name="Detter J.C."/>
            <person name="Han C."/>
            <person name="Larimer F."/>
            <person name="Land M."/>
            <person name="Hauser L."/>
            <person name="Kyrpides N."/>
            <person name="Ovchinnikova G."/>
            <person name="Kataeva I."/>
            <person name="Adams M.W.W."/>
        </authorList>
    </citation>
    <scope>NUCLEOTIDE SEQUENCE [LARGE SCALE GENOMIC DNA]</scope>
    <source>
        <strain>ATCC BAA-1888 / DSM 6725 / KCTC 15123 / Z-1320</strain>
    </source>
</reference>
<sequence>MKVVLLQDVKGLGKKDSVVEVNDGYARNYLIPRKLAVPATEGLEKHLKEKKEAEQKKKEKELEAAKDLASKLEKSQIIIKAKAGENGKLFGSITNKEIAEEIKKQLGFDINKKKIELDDPIKLIGSYDVVIRLYQGVVAKLKVHVTAS</sequence>
<name>RL9_CALBD</name>
<proteinExistence type="inferred from homology"/>
<organism>
    <name type="scientific">Caldicellulosiruptor bescii (strain ATCC BAA-1888 / DSM 6725 / KCTC 15123 / Z-1320)</name>
    <name type="common">Anaerocellum thermophilum</name>
    <dbReference type="NCBI Taxonomy" id="521460"/>
    <lineage>
        <taxon>Bacteria</taxon>
        <taxon>Bacillati</taxon>
        <taxon>Bacillota</taxon>
        <taxon>Bacillota incertae sedis</taxon>
        <taxon>Caldicellulosiruptorales</taxon>
        <taxon>Caldicellulosiruptoraceae</taxon>
        <taxon>Caldicellulosiruptor</taxon>
    </lineage>
</organism>
<comment type="function">
    <text evidence="1">Binds to the 23S rRNA.</text>
</comment>
<comment type="similarity">
    <text evidence="1">Belongs to the bacterial ribosomal protein bL9 family.</text>
</comment>
<accession>B9MQN7</accession>
<protein>
    <recommendedName>
        <fullName evidence="1">Large ribosomal subunit protein bL9</fullName>
    </recommendedName>
    <alternativeName>
        <fullName evidence="2">50S ribosomal protein L9</fullName>
    </alternativeName>
</protein>
<keyword id="KW-0687">Ribonucleoprotein</keyword>
<keyword id="KW-0689">Ribosomal protein</keyword>
<keyword id="KW-0694">RNA-binding</keyword>
<keyword id="KW-0699">rRNA-binding</keyword>